<feature type="chain" id="PRO_0000358337" description="NADH-quinone oxidoreductase subunit B 1">
    <location>
        <begin position="1"/>
        <end position="158"/>
    </location>
</feature>
<feature type="binding site" evidence="2">
    <location>
        <position position="37"/>
    </location>
    <ligand>
        <name>[4Fe-4S] cluster</name>
        <dbReference type="ChEBI" id="CHEBI:49883"/>
    </ligand>
</feature>
<feature type="binding site" evidence="2">
    <location>
        <position position="38"/>
    </location>
    <ligand>
        <name>[4Fe-4S] cluster</name>
        <dbReference type="ChEBI" id="CHEBI:49883"/>
    </ligand>
</feature>
<feature type="binding site" evidence="2">
    <location>
        <position position="102"/>
    </location>
    <ligand>
        <name>[4Fe-4S] cluster</name>
        <dbReference type="ChEBI" id="CHEBI:49883"/>
    </ligand>
</feature>
<feature type="binding site" evidence="2">
    <location>
        <position position="132"/>
    </location>
    <ligand>
        <name>[4Fe-4S] cluster</name>
        <dbReference type="ChEBI" id="CHEBI:49883"/>
    </ligand>
</feature>
<organism>
    <name type="scientific">Acidithiobacillus ferrooxidans (strain ATCC 53993 / BNL-5-31)</name>
    <name type="common">Leptospirillum ferrooxidans (ATCC 53993)</name>
    <dbReference type="NCBI Taxonomy" id="380394"/>
    <lineage>
        <taxon>Bacteria</taxon>
        <taxon>Pseudomonadati</taxon>
        <taxon>Pseudomonadota</taxon>
        <taxon>Acidithiobacillia</taxon>
        <taxon>Acidithiobacillales</taxon>
        <taxon>Acidithiobacillaceae</taxon>
        <taxon>Acidithiobacillus</taxon>
    </lineage>
</organism>
<comment type="function">
    <text evidence="1">NDH-1 shuttles electrons from NADH, via FMN and iron-sulfur (Fe-S) centers, to quinones in the respiratory chain. Couples the redox reaction to proton translocation (for every two electrons transferred, four hydrogen ions are translocated across the cytoplasmic membrane), and thus conserves the redox energy in a proton gradient (By similarity).</text>
</comment>
<comment type="catalytic activity">
    <reaction evidence="2">
        <text>a quinone + NADH + 5 H(+)(in) = a quinol + NAD(+) + 4 H(+)(out)</text>
        <dbReference type="Rhea" id="RHEA:57888"/>
        <dbReference type="ChEBI" id="CHEBI:15378"/>
        <dbReference type="ChEBI" id="CHEBI:24646"/>
        <dbReference type="ChEBI" id="CHEBI:57540"/>
        <dbReference type="ChEBI" id="CHEBI:57945"/>
        <dbReference type="ChEBI" id="CHEBI:132124"/>
    </reaction>
</comment>
<comment type="cofactor">
    <cofactor evidence="2">
        <name>[4Fe-4S] cluster</name>
        <dbReference type="ChEBI" id="CHEBI:49883"/>
    </cofactor>
    <text evidence="2">Binds 1 [4Fe-4S] cluster.</text>
</comment>
<comment type="subunit">
    <text evidence="2">NDH-1 is composed of 14 different subunits. Subunits NuoB, C, D, E, F, and G constitute the peripheral sector of the complex.</text>
</comment>
<comment type="subcellular location">
    <subcellularLocation>
        <location evidence="2">Cell inner membrane</location>
        <topology evidence="2">Peripheral membrane protein</topology>
        <orientation evidence="2">Cytoplasmic side</orientation>
    </subcellularLocation>
</comment>
<comment type="similarity">
    <text evidence="2">Belongs to the complex I 20 kDa subunit family.</text>
</comment>
<evidence type="ECO:0000250" key="1"/>
<evidence type="ECO:0000255" key="2">
    <source>
        <dbReference type="HAMAP-Rule" id="MF_01356"/>
    </source>
</evidence>
<gene>
    <name evidence="2" type="primary">nuoB1</name>
    <name type="ordered locus">Lferr_2042</name>
</gene>
<accession>B5EM21</accession>
<keyword id="KW-0004">4Fe-4S</keyword>
<keyword id="KW-0997">Cell inner membrane</keyword>
<keyword id="KW-1003">Cell membrane</keyword>
<keyword id="KW-0408">Iron</keyword>
<keyword id="KW-0411">Iron-sulfur</keyword>
<keyword id="KW-0472">Membrane</keyword>
<keyword id="KW-0479">Metal-binding</keyword>
<keyword id="KW-0520">NAD</keyword>
<keyword id="KW-0874">Quinone</keyword>
<keyword id="KW-1278">Translocase</keyword>
<keyword id="KW-0813">Transport</keyword>
<keyword id="KW-0830">Ubiquinone</keyword>
<proteinExistence type="inferred from homology"/>
<reference key="1">
    <citation type="submission" date="2008-08" db="EMBL/GenBank/DDBJ databases">
        <title>Complete sequence of Acidithiobacillus ferrooxidans ATCC 53993.</title>
        <authorList>
            <person name="Lucas S."/>
            <person name="Copeland A."/>
            <person name="Lapidus A."/>
            <person name="Glavina del Rio T."/>
            <person name="Dalin E."/>
            <person name="Tice H."/>
            <person name="Bruce D."/>
            <person name="Goodwin L."/>
            <person name="Pitluck S."/>
            <person name="Sims D."/>
            <person name="Brettin T."/>
            <person name="Detter J.C."/>
            <person name="Han C."/>
            <person name="Kuske C.R."/>
            <person name="Larimer F."/>
            <person name="Land M."/>
            <person name="Hauser L."/>
            <person name="Kyrpides N."/>
            <person name="Lykidis A."/>
            <person name="Borole A.P."/>
        </authorList>
    </citation>
    <scope>NUCLEOTIDE SEQUENCE [LARGE SCALE GENOMIC DNA]</scope>
    <source>
        <strain>ATCC 53993 / BNL-5-31</strain>
    </source>
</reference>
<protein>
    <recommendedName>
        <fullName evidence="2">NADH-quinone oxidoreductase subunit B 1</fullName>
        <ecNumber evidence="2">7.1.1.-</ecNumber>
    </recommendedName>
    <alternativeName>
        <fullName evidence="2">NADH dehydrogenase I subunit B 1</fullName>
    </alternativeName>
    <alternativeName>
        <fullName evidence="2">NDH-1 subunit B 1</fullName>
    </alternativeName>
</protein>
<dbReference type="EC" id="7.1.1.-" evidence="2"/>
<dbReference type="EMBL" id="CP001132">
    <property type="protein sequence ID" value="ACH84257.1"/>
    <property type="molecule type" value="Genomic_DNA"/>
</dbReference>
<dbReference type="RefSeq" id="WP_009561179.1">
    <property type="nucleotide sequence ID" value="NC_011206.1"/>
</dbReference>
<dbReference type="SMR" id="B5EM21"/>
<dbReference type="KEGG" id="afe:Lferr_2042"/>
<dbReference type="eggNOG" id="COG0377">
    <property type="taxonomic scope" value="Bacteria"/>
</dbReference>
<dbReference type="HOGENOM" id="CLU_055737_7_3_6"/>
<dbReference type="GO" id="GO:0005886">
    <property type="term" value="C:plasma membrane"/>
    <property type="evidence" value="ECO:0007669"/>
    <property type="project" value="UniProtKB-SubCell"/>
</dbReference>
<dbReference type="GO" id="GO:0045271">
    <property type="term" value="C:respiratory chain complex I"/>
    <property type="evidence" value="ECO:0007669"/>
    <property type="project" value="TreeGrafter"/>
</dbReference>
<dbReference type="GO" id="GO:0051539">
    <property type="term" value="F:4 iron, 4 sulfur cluster binding"/>
    <property type="evidence" value="ECO:0007669"/>
    <property type="project" value="UniProtKB-KW"/>
</dbReference>
<dbReference type="GO" id="GO:0005506">
    <property type="term" value="F:iron ion binding"/>
    <property type="evidence" value="ECO:0007669"/>
    <property type="project" value="UniProtKB-UniRule"/>
</dbReference>
<dbReference type="GO" id="GO:0008137">
    <property type="term" value="F:NADH dehydrogenase (ubiquinone) activity"/>
    <property type="evidence" value="ECO:0007669"/>
    <property type="project" value="InterPro"/>
</dbReference>
<dbReference type="GO" id="GO:0050136">
    <property type="term" value="F:NADH:ubiquinone reductase (non-electrogenic) activity"/>
    <property type="evidence" value="ECO:0007669"/>
    <property type="project" value="UniProtKB-UniRule"/>
</dbReference>
<dbReference type="GO" id="GO:0048038">
    <property type="term" value="F:quinone binding"/>
    <property type="evidence" value="ECO:0007669"/>
    <property type="project" value="UniProtKB-KW"/>
</dbReference>
<dbReference type="GO" id="GO:0009060">
    <property type="term" value="P:aerobic respiration"/>
    <property type="evidence" value="ECO:0007669"/>
    <property type="project" value="TreeGrafter"/>
</dbReference>
<dbReference type="GO" id="GO:0015990">
    <property type="term" value="P:electron transport coupled proton transport"/>
    <property type="evidence" value="ECO:0007669"/>
    <property type="project" value="TreeGrafter"/>
</dbReference>
<dbReference type="FunFam" id="3.40.50.12280:FF:000001">
    <property type="entry name" value="NADH-quinone oxidoreductase subunit B 2"/>
    <property type="match status" value="1"/>
</dbReference>
<dbReference type="Gene3D" id="3.40.50.12280">
    <property type="match status" value="1"/>
</dbReference>
<dbReference type="HAMAP" id="MF_01356">
    <property type="entry name" value="NDH1_NuoB"/>
    <property type="match status" value="1"/>
</dbReference>
<dbReference type="InterPro" id="IPR006137">
    <property type="entry name" value="NADH_UbQ_OxRdtase-like_20kDa"/>
</dbReference>
<dbReference type="InterPro" id="IPR006138">
    <property type="entry name" value="NADH_UQ_OxRdtase_20Kd_su"/>
</dbReference>
<dbReference type="NCBIfam" id="TIGR01957">
    <property type="entry name" value="nuoB_fam"/>
    <property type="match status" value="1"/>
</dbReference>
<dbReference type="NCBIfam" id="NF005012">
    <property type="entry name" value="PRK06411.1"/>
    <property type="match status" value="1"/>
</dbReference>
<dbReference type="PANTHER" id="PTHR11995">
    <property type="entry name" value="NADH DEHYDROGENASE"/>
    <property type="match status" value="1"/>
</dbReference>
<dbReference type="PANTHER" id="PTHR11995:SF14">
    <property type="entry name" value="NADH DEHYDROGENASE [UBIQUINONE] IRON-SULFUR PROTEIN 7, MITOCHONDRIAL"/>
    <property type="match status" value="1"/>
</dbReference>
<dbReference type="Pfam" id="PF01058">
    <property type="entry name" value="Oxidored_q6"/>
    <property type="match status" value="1"/>
</dbReference>
<dbReference type="SUPFAM" id="SSF56770">
    <property type="entry name" value="HydA/Nqo6-like"/>
    <property type="match status" value="1"/>
</dbReference>
<dbReference type="PROSITE" id="PS01150">
    <property type="entry name" value="COMPLEX1_20K"/>
    <property type="match status" value="1"/>
</dbReference>
<sequence>MGIEGILEKGFVTTSIDTVVNWSRTGSLWPMTFGLACCAVEMMHAGAARYDLDRFGLLFRPSPRQSDLMIVAGTLVNKMAPALRKVYDQMPEPRWVVSMGSCANGGGYYHYSYSVVRGCDRIVPVDIYVPGCPPTAEALIFGLIQLQKKIRRTNTIAR</sequence>
<name>NUOB1_ACIF5</name>